<gene>
    <name evidence="1" type="primary">atpD</name>
    <name type="ordered locus">GTNG_3304</name>
</gene>
<accession>A4ITI9</accession>
<proteinExistence type="inferred from homology"/>
<organism>
    <name type="scientific">Geobacillus thermodenitrificans (strain NG80-2)</name>
    <dbReference type="NCBI Taxonomy" id="420246"/>
    <lineage>
        <taxon>Bacteria</taxon>
        <taxon>Bacillati</taxon>
        <taxon>Bacillota</taxon>
        <taxon>Bacilli</taxon>
        <taxon>Bacillales</taxon>
        <taxon>Anoxybacillaceae</taxon>
        <taxon>Geobacillus</taxon>
    </lineage>
</organism>
<dbReference type="EC" id="7.1.2.2" evidence="1"/>
<dbReference type="EMBL" id="CP000557">
    <property type="protein sequence ID" value="ABO68643.1"/>
    <property type="molecule type" value="Genomic_DNA"/>
</dbReference>
<dbReference type="RefSeq" id="WP_008880693.1">
    <property type="nucleotide sequence ID" value="NC_009328.1"/>
</dbReference>
<dbReference type="BMRB" id="A4ITI9"/>
<dbReference type="SMR" id="A4ITI9"/>
<dbReference type="GeneID" id="87622586"/>
<dbReference type="KEGG" id="gtn:GTNG_3304"/>
<dbReference type="eggNOG" id="COG0055">
    <property type="taxonomic scope" value="Bacteria"/>
</dbReference>
<dbReference type="HOGENOM" id="CLU_022398_0_2_9"/>
<dbReference type="Proteomes" id="UP000001578">
    <property type="component" value="Chromosome"/>
</dbReference>
<dbReference type="GO" id="GO:0005886">
    <property type="term" value="C:plasma membrane"/>
    <property type="evidence" value="ECO:0007669"/>
    <property type="project" value="UniProtKB-SubCell"/>
</dbReference>
<dbReference type="GO" id="GO:0045259">
    <property type="term" value="C:proton-transporting ATP synthase complex"/>
    <property type="evidence" value="ECO:0007669"/>
    <property type="project" value="UniProtKB-KW"/>
</dbReference>
<dbReference type="GO" id="GO:0005524">
    <property type="term" value="F:ATP binding"/>
    <property type="evidence" value="ECO:0007669"/>
    <property type="project" value="UniProtKB-UniRule"/>
</dbReference>
<dbReference type="GO" id="GO:0016887">
    <property type="term" value="F:ATP hydrolysis activity"/>
    <property type="evidence" value="ECO:0007669"/>
    <property type="project" value="InterPro"/>
</dbReference>
<dbReference type="GO" id="GO:0046933">
    <property type="term" value="F:proton-transporting ATP synthase activity, rotational mechanism"/>
    <property type="evidence" value="ECO:0007669"/>
    <property type="project" value="UniProtKB-UniRule"/>
</dbReference>
<dbReference type="CDD" id="cd18110">
    <property type="entry name" value="ATP-synt_F1_beta_C"/>
    <property type="match status" value="1"/>
</dbReference>
<dbReference type="CDD" id="cd18115">
    <property type="entry name" value="ATP-synt_F1_beta_N"/>
    <property type="match status" value="1"/>
</dbReference>
<dbReference type="CDD" id="cd01133">
    <property type="entry name" value="F1-ATPase_beta_CD"/>
    <property type="match status" value="1"/>
</dbReference>
<dbReference type="FunFam" id="1.10.1140.10:FF:000001">
    <property type="entry name" value="ATP synthase subunit beta"/>
    <property type="match status" value="1"/>
</dbReference>
<dbReference type="FunFam" id="2.40.10.170:FF:000005">
    <property type="entry name" value="ATP synthase subunit beta"/>
    <property type="match status" value="1"/>
</dbReference>
<dbReference type="FunFam" id="3.40.50.300:FF:000004">
    <property type="entry name" value="ATP synthase subunit beta"/>
    <property type="match status" value="1"/>
</dbReference>
<dbReference type="Gene3D" id="2.40.10.170">
    <property type="match status" value="1"/>
</dbReference>
<dbReference type="Gene3D" id="1.10.1140.10">
    <property type="entry name" value="Bovine Mitochondrial F1-atpase, Atp Synthase Beta Chain, Chain D, domain 3"/>
    <property type="match status" value="1"/>
</dbReference>
<dbReference type="Gene3D" id="3.40.50.300">
    <property type="entry name" value="P-loop containing nucleotide triphosphate hydrolases"/>
    <property type="match status" value="1"/>
</dbReference>
<dbReference type="HAMAP" id="MF_01347">
    <property type="entry name" value="ATP_synth_beta_bact"/>
    <property type="match status" value="1"/>
</dbReference>
<dbReference type="InterPro" id="IPR003593">
    <property type="entry name" value="AAA+_ATPase"/>
</dbReference>
<dbReference type="InterPro" id="IPR055190">
    <property type="entry name" value="ATP-synt_VA_C"/>
</dbReference>
<dbReference type="InterPro" id="IPR005722">
    <property type="entry name" value="ATP_synth_F1_bsu"/>
</dbReference>
<dbReference type="InterPro" id="IPR020003">
    <property type="entry name" value="ATPase_a/bsu_AS"/>
</dbReference>
<dbReference type="InterPro" id="IPR050053">
    <property type="entry name" value="ATPase_alpha/beta_chains"/>
</dbReference>
<dbReference type="InterPro" id="IPR004100">
    <property type="entry name" value="ATPase_F1/V1/A1_a/bsu_N"/>
</dbReference>
<dbReference type="InterPro" id="IPR036121">
    <property type="entry name" value="ATPase_F1/V1/A1_a/bsu_N_sf"/>
</dbReference>
<dbReference type="InterPro" id="IPR000194">
    <property type="entry name" value="ATPase_F1/V1/A1_a/bsu_nucl-bd"/>
</dbReference>
<dbReference type="InterPro" id="IPR024034">
    <property type="entry name" value="ATPase_F1/V1_b/a_C"/>
</dbReference>
<dbReference type="InterPro" id="IPR027417">
    <property type="entry name" value="P-loop_NTPase"/>
</dbReference>
<dbReference type="NCBIfam" id="TIGR01039">
    <property type="entry name" value="atpD"/>
    <property type="match status" value="1"/>
</dbReference>
<dbReference type="PANTHER" id="PTHR15184">
    <property type="entry name" value="ATP SYNTHASE"/>
    <property type="match status" value="1"/>
</dbReference>
<dbReference type="PANTHER" id="PTHR15184:SF71">
    <property type="entry name" value="ATP SYNTHASE SUBUNIT BETA, MITOCHONDRIAL"/>
    <property type="match status" value="1"/>
</dbReference>
<dbReference type="Pfam" id="PF00006">
    <property type="entry name" value="ATP-synt_ab"/>
    <property type="match status" value="1"/>
</dbReference>
<dbReference type="Pfam" id="PF02874">
    <property type="entry name" value="ATP-synt_ab_N"/>
    <property type="match status" value="1"/>
</dbReference>
<dbReference type="Pfam" id="PF22919">
    <property type="entry name" value="ATP-synt_VA_C"/>
    <property type="match status" value="1"/>
</dbReference>
<dbReference type="SMART" id="SM00382">
    <property type="entry name" value="AAA"/>
    <property type="match status" value="1"/>
</dbReference>
<dbReference type="SUPFAM" id="SSF47917">
    <property type="entry name" value="C-terminal domain of alpha and beta subunits of F1 ATP synthase"/>
    <property type="match status" value="1"/>
</dbReference>
<dbReference type="SUPFAM" id="SSF50615">
    <property type="entry name" value="N-terminal domain of alpha and beta subunits of F1 ATP synthase"/>
    <property type="match status" value="1"/>
</dbReference>
<dbReference type="SUPFAM" id="SSF52540">
    <property type="entry name" value="P-loop containing nucleoside triphosphate hydrolases"/>
    <property type="match status" value="1"/>
</dbReference>
<dbReference type="PROSITE" id="PS00152">
    <property type="entry name" value="ATPASE_ALPHA_BETA"/>
    <property type="match status" value="1"/>
</dbReference>
<keyword id="KW-0066">ATP synthesis</keyword>
<keyword id="KW-0067">ATP-binding</keyword>
<keyword id="KW-1003">Cell membrane</keyword>
<keyword id="KW-0139">CF(1)</keyword>
<keyword id="KW-0375">Hydrogen ion transport</keyword>
<keyword id="KW-0406">Ion transport</keyword>
<keyword id="KW-0472">Membrane</keyword>
<keyword id="KW-0547">Nucleotide-binding</keyword>
<keyword id="KW-1278">Translocase</keyword>
<keyword id="KW-0813">Transport</keyword>
<feature type="chain" id="PRO_1000055116" description="ATP synthase subunit beta">
    <location>
        <begin position="1"/>
        <end position="473"/>
    </location>
</feature>
<feature type="binding site" evidence="1">
    <location>
        <begin position="158"/>
        <end position="165"/>
    </location>
    <ligand>
        <name>ATP</name>
        <dbReference type="ChEBI" id="CHEBI:30616"/>
    </ligand>
</feature>
<reference key="1">
    <citation type="journal article" date="2007" name="Proc. Natl. Acad. Sci. U.S.A.">
        <title>Genome and proteome of long-chain alkane degrading Geobacillus thermodenitrificans NG80-2 isolated from a deep-subsurface oil reservoir.</title>
        <authorList>
            <person name="Feng L."/>
            <person name="Wang W."/>
            <person name="Cheng J."/>
            <person name="Ren Y."/>
            <person name="Zhao G."/>
            <person name="Gao C."/>
            <person name="Tang Y."/>
            <person name="Liu X."/>
            <person name="Han W."/>
            <person name="Peng X."/>
            <person name="Liu R."/>
            <person name="Wang L."/>
        </authorList>
    </citation>
    <scope>NUCLEOTIDE SEQUENCE [LARGE SCALE GENOMIC DNA]</scope>
    <source>
        <strain>NG80-2</strain>
    </source>
</reference>
<name>ATPB_GEOTN</name>
<comment type="function">
    <text evidence="1">Produces ATP from ADP in the presence of a proton gradient across the membrane. The catalytic sites are hosted primarily by the beta subunits.</text>
</comment>
<comment type="catalytic activity">
    <reaction evidence="1">
        <text>ATP + H2O + 4 H(+)(in) = ADP + phosphate + 5 H(+)(out)</text>
        <dbReference type="Rhea" id="RHEA:57720"/>
        <dbReference type="ChEBI" id="CHEBI:15377"/>
        <dbReference type="ChEBI" id="CHEBI:15378"/>
        <dbReference type="ChEBI" id="CHEBI:30616"/>
        <dbReference type="ChEBI" id="CHEBI:43474"/>
        <dbReference type="ChEBI" id="CHEBI:456216"/>
        <dbReference type="EC" id="7.1.2.2"/>
    </reaction>
</comment>
<comment type="subunit">
    <text evidence="1">F-type ATPases have 2 components, CF(1) - the catalytic core - and CF(0) - the membrane proton channel. CF(1) has five subunits: alpha(3), beta(3), gamma(1), delta(1), epsilon(1). CF(0) has three main subunits: a(1), b(2) and c(9-12). The alpha and beta chains form an alternating ring which encloses part of the gamma chain. CF(1) is attached to CF(0) by a central stalk formed by the gamma and epsilon chains, while a peripheral stalk is formed by the delta and b chains.</text>
</comment>
<comment type="subcellular location">
    <subcellularLocation>
        <location evidence="1">Cell membrane</location>
        <topology evidence="1">Peripheral membrane protein</topology>
    </subcellularLocation>
</comment>
<comment type="similarity">
    <text evidence="1">Belongs to the ATPase alpha/beta chains family.</text>
</comment>
<sequence>MTRGRVIQVMGPVVDVKFENGHLPAIYNALKIQHQARNENEVDIDLTLEVALHLGDDTVRTIAMASTDGLIRGMEVVDTGAPISVPVGDVTLGRVFNVLGEPIDLQDDIPAEARRDPIHRPAPKFEELATEVEILETGIKVVDLLAPYIKGGKIGLFGGAGVGKTVLIQELIHNIAQEHGGISVFAGVGERTREGNDLYHEMKDSGVISKTAMVFGQMNEPPGARMRVALTGLTMAEYFRDEQGQDVLLFIDNIFRFTQAGSEVSALLGRMPSAVGYQPTLATEMGQLQERITSTSKGSITSIQAIYVPADDYTDPAPATTFSHLDATTNLERKLAEMGIYPAVDPLASTSRALAPEIVGEEHYQVARRVQQTLQRYKELQDIIAILGMDELSDEDKLVVHRARRIQFFLSQNFHVAEQFTGQPGSYVPVKETVRGFKEILDGKYDHLPEDAFRLVGRIEEVVEKAKAMGVEV</sequence>
<evidence type="ECO:0000255" key="1">
    <source>
        <dbReference type="HAMAP-Rule" id="MF_01347"/>
    </source>
</evidence>
<protein>
    <recommendedName>
        <fullName evidence="1">ATP synthase subunit beta</fullName>
        <ecNumber evidence="1">7.1.2.2</ecNumber>
    </recommendedName>
    <alternativeName>
        <fullName evidence="1">ATP synthase F1 sector subunit beta</fullName>
    </alternativeName>
    <alternativeName>
        <fullName evidence="1">F-ATPase subunit beta</fullName>
    </alternativeName>
</protein>